<feature type="chain" id="PRO_1000045554" description="Fumarate reductase subunit D">
    <location>
        <begin position="1"/>
        <end position="114"/>
    </location>
</feature>
<feature type="transmembrane region" description="Helical" evidence="1">
    <location>
        <begin position="25"/>
        <end position="45"/>
    </location>
</feature>
<feature type="transmembrane region" description="Helical" evidence="1">
    <location>
        <begin position="50"/>
        <end position="70"/>
    </location>
</feature>
<feature type="transmembrane region" description="Helical" evidence="1">
    <location>
        <begin position="94"/>
        <end position="114"/>
    </location>
</feature>
<protein>
    <recommendedName>
        <fullName evidence="1">Fumarate reductase subunit D</fullName>
    </recommendedName>
    <alternativeName>
        <fullName evidence="1">Quinol-fumarate reductase subunit D</fullName>
        <shortName evidence="1">QFR subunit D</shortName>
    </alternativeName>
</protein>
<dbReference type="EMBL" id="AE016827">
    <property type="protein sequence ID" value="AAU38262.1"/>
    <property type="molecule type" value="Genomic_DNA"/>
</dbReference>
<dbReference type="RefSeq" id="WP_011200823.1">
    <property type="nucleotide sequence ID" value="NC_006300.1"/>
</dbReference>
<dbReference type="SMR" id="Q65RZ8"/>
<dbReference type="STRING" id="221988.MS1655"/>
<dbReference type="KEGG" id="msu:MS1655"/>
<dbReference type="eggNOG" id="COG3080">
    <property type="taxonomic scope" value="Bacteria"/>
</dbReference>
<dbReference type="HOGENOM" id="CLU_168367_0_0_6"/>
<dbReference type="OrthoDB" id="9804636at2"/>
<dbReference type="Proteomes" id="UP000000607">
    <property type="component" value="Chromosome"/>
</dbReference>
<dbReference type="GO" id="GO:0045283">
    <property type="term" value="C:fumarate reductase complex"/>
    <property type="evidence" value="ECO:0007669"/>
    <property type="project" value="UniProtKB-UniRule"/>
</dbReference>
<dbReference type="GO" id="GO:0005886">
    <property type="term" value="C:plasma membrane"/>
    <property type="evidence" value="ECO:0007669"/>
    <property type="project" value="UniProtKB-SubCell"/>
</dbReference>
<dbReference type="GO" id="GO:0000104">
    <property type="term" value="F:succinate dehydrogenase activity"/>
    <property type="evidence" value="ECO:0007669"/>
    <property type="project" value="UniProtKB-UniRule"/>
</dbReference>
<dbReference type="GO" id="GO:0006106">
    <property type="term" value="P:fumarate metabolic process"/>
    <property type="evidence" value="ECO:0007669"/>
    <property type="project" value="InterPro"/>
</dbReference>
<dbReference type="CDD" id="cd00547">
    <property type="entry name" value="QFR_TypeD_subunitD"/>
    <property type="match status" value="1"/>
</dbReference>
<dbReference type="Gene3D" id="1.20.1300.10">
    <property type="entry name" value="Fumarate reductase/succinate dehydrogenase, transmembrane subunit"/>
    <property type="match status" value="1"/>
</dbReference>
<dbReference type="HAMAP" id="MF_00709">
    <property type="entry name" value="Fumarate_red_D"/>
    <property type="match status" value="1"/>
</dbReference>
<dbReference type="InterPro" id="IPR003418">
    <property type="entry name" value="Fumarate_red_D"/>
</dbReference>
<dbReference type="InterPro" id="IPR034804">
    <property type="entry name" value="SQR/QFR_C/D"/>
</dbReference>
<dbReference type="NCBIfam" id="NF003977">
    <property type="entry name" value="PRK05470.1-1"/>
    <property type="match status" value="1"/>
</dbReference>
<dbReference type="Pfam" id="PF02313">
    <property type="entry name" value="Fumarate_red_D"/>
    <property type="match status" value="1"/>
</dbReference>
<dbReference type="PIRSF" id="PIRSF000179">
    <property type="entry name" value="FrdD"/>
    <property type="match status" value="1"/>
</dbReference>
<dbReference type="SUPFAM" id="SSF81343">
    <property type="entry name" value="Fumarate reductase respiratory complex transmembrane subunits"/>
    <property type="match status" value="1"/>
</dbReference>
<proteinExistence type="inferred from homology"/>
<accession>Q65RZ8</accession>
<reference key="1">
    <citation type="journal article" date="2004" name="Nat. Biotechnol.">
        <title>The genome sequence of the capnophilic rumen bacterium Mannheimia succiniciproducens.</title>
        <authorList>
            <person name="Hong S.H."/>
            <person name="Kim J.S."/>
            <person name="Lee S.Y."/>
            <person name="In Y.H."/>
            <person name="Choi S.S."/>
            <person name="Rih J.-K."/>
            <person name="Kim C.H."/>
            <person name="Jeong H."/>
            <person name="Hur C.G."/>
            <person name="Kim J.J."/>
        </authorList>
    </citation>
    <scope>NUCLEOTIDE SEQUENCE [LARGE SCALE GENOMIC DNA]</scope>
    <source>
        <strain>KCTC 0769BP / MBEL55E</strain>
    </source>
</reference>
<comment type="function">
    <text evidence="1">Anchors the catalytic components of the fumarate reductase complex to the cell membrane, binds quinones.</text>
</comment>
<comment type="subunit">
    <text evidence="1">Part of an enzyme complex containing four subunits: a flavoprotein (FrdA), an iron-sulfur protein (FrdB), and two hydrophobic anchor proteins (FrdC and FrdD).</text>
</comment>
<comment type="subcellular location">
    <subcellularLocation>
        <location evidence="1">Cell inner membrane</location>
        <topology evidence="1">Multi-pass membrane protein</topology>
    </subcellularLocation>
</comment>
<comment type="similarity">
    <text evidence="1">Belongs to the FrdD family.</text>
</comment>
<name>FRDD_MANSM</name>
<gene>
    <name evidence="1" type="primary">frdD</name>
    <name type="ordered locus">MS1655</name>
</gene>
<sequence length="114" mass="12540">MVDQNPKRSNEPPVWLMFSAGGMVSGLAFPVLILILGILLPFGIISPDNIIAFSHHWFGKLVILALTIFPMWAGLHRLHHGMHDIKVHVPNGGLIFYGLAAVYSFIVLFAVIAI</sequence>
<organism>
    <name type="scientific">Mannheimia succiniciproducens (strain KCTC 0769BP / MBEL55E)</name>
    <dbReference type="NCBI Taxonomy" id="221988"/>
    <lineage>
        <taxon>Bacteria</taxon>
        <taxon>Pseudomonadati</taxon>
        <taxon>Pseudomonadota</taxon>
        <taxon>Gammaproteobacteria</taxon>
        <taxon>Pasteurellales</taxon>
        <taxon>Pasteurellaceae</taxon>
        <taxon>Basfia</taxon>
    </lineage>
</organism>
<keyword id="KW-0997">Cell inner membrane</keyword>
<keyword id="KW-1003">Cell membrane</keyword>
<keyword id="KW-0472">Membrane</keyword>
<keyword id="KW-0812">Transmembrane</keyword>
<keyword id="KW-1133">Transmembrane helix</keyword>
<evidence type="ECO:0000255" key="1">
    <source>
        <dbReference type="HAMAP-Rule" id="MF_00709"/>
    </source>
</evidence>